<dbReference type="EMBL" id="L04483">
    <property type="protein sequence ID" value="AAA99893.1"/>
    <property type="molecule type" value="mRNA"/>
</dbReference>
<dbReference type="EMBL" id="AJ250907">
    <property type="protein sequence ID" value="CAB83213.1"/>
    <property type="molecule type" value="Genomic_DNA"/>
</dbReference>
<dbReference type="EMBL" id="AB061843">
    <property type="protein sequence ID" value="BAB79481.1"/>
    <property type="molecule type" value="Genomic_DNA"/>
</dbReference>
<dbReference type="EMBL" id="AL121832">
    <property type="status" value="NOT_ANNOTATED_CDS"/>
    <property type="molecule type" value="Genomic_DNA"/>
</dbReference>
<dbReference type="EMBL" id="AB007157">
    <property type="protein sequence ID" value="BAA25821.1"/>
    <property type="molecule type" value="Genomic_DNA"/>
</dbReference>
<dbReference type="CCDS" id="CCDS13497.1"/>
<dbReference type="PIR" id="S34108">
    <property type="entry name" value="S34108"/>
</dbReference>
<dbReference type="RefSeq" id="NP_001015.1">
    <property type="nucleotide sequence ID" value="NM_001024.4"/>
</dbReference>
<dbReference type="PDB" id="4UG0">
    <property type="method" value="EM"/>
    <property type="chains" value="SV=1-83"/>
</dbReference>
<dbReference type="PDB" id="4V6X">
    <property type="method" value="EM"/>
    <property type="resolution" value="5.00 A"/>
    <property type="chains" value="AV=1-83"/>
</dbReference>
<dbReference type="PDB" id="5A2Q">
    <property type="method" value="EM"/>
    <property type="resolution" value="3.90 A"/>
    <property type="chains" value="V=1-83"/>
</dbReference>
<dbReference type="PDB" id="5AJ0">
    <property type="method" value="EM"/>
    <property type="resolution" value="3.50 A"/>
    <property type="chains" value="BV=1-83"/>
</dbReference>
<dbReference type="PDB" id="5FLX">
    <property type="method" value="EM"/>
    <property type="resolution" value="3.90 A"/>
    <property type="chains" value="V=1-83"/>
</dbReference>
<dbReference type="PDB" id="5LKS">
    <property type="method" value="EM"/>
    <property type="resolution" value="3.60 A"/>
    <property type="chains" value="SV=1-83"/>
</dbReference>
<dbReference type="PDB" id="5OA3">
    <property type="method" value="EM"/>
    <property type="resolution" value="4.30 A"/>
    <property type="chains" value="V=1-83"/>
</dbReference>
<dbReference type="PDB" id="5T2C">
    <property type="method" value="EM"/>
    <property type="resolution" value="3.60 A"/>
    <property type="chains" value="AC=1-83"/>
</dbReference>
<dbReference type="PDB" id="5VYC">
    <property type="method" value="X-ray"/>
    <property type="resolution" value="6.00 A"/>
    <property type="chains" value="V1/V2/V3/V4/V5/V6=1-83"/>
</dbReference>
<dbReference type="PDB" id="6G18">
    <property type="method" value="EM"/>
    <property type="resolution" value="3.60 A"/>
    <property type="chains" value="V=1-83"/>
</dbReference>
<dbReference type="PDB" id="6G4S">
    <property type="method" value="EM"/>
    <property type="resolution" value="4.00 A"/>
    <property type="chains" value="V=1-83"/>
</dbReference>
<dbReference type="PDB" id="6G51">
    <property type="method" value="EM"/>
    <property type="resolution" value="4.10 A"/>
    <property type="chains" value="V=1-83"/>
</dbReference>
<dbReference type="PDB" id="6G53">
    <property type="method" value="EM"/>
    <property type="resolution" value="4.50 A"/>
    <property type="chains" value="V=1-83"/>
</dbReference>
<dbReference type="PDB" id="6G5H">
    <property type="method" value="EM"/>
    <property type="resolution" value="3.60 A"/>
    <property type="chains" value="V=1-83"/>
</dbReference>
<dbReference type="PDB" id="6G5I">
    <property type="method" value="EM"/>
    <property type="resolution" value="3.50 A"/>
    <property type="chains" value="V=1-83"/>
</dbReference>
<dbReference type="PDB" id="6IP5">
    <property type="method" value="EM"/>
    <property type="resolution" value="3.90 A"/>
    <property type="chains" value="3A=1-83"/>
</dbReference>
<dbReference type="PDB" id="6IP6">
    <property type="method" value="EM"/>
    <property type="resolution" value="4.50 A"/>
    <property type="chains" value="3A=1-83"/>
</dbReference>
<dbReference type="PDB" id="6IP8">
    <property type="method" value="EM"/>
    <property type="resolution" value="3.90 A"/>
    <property type="chains" value="3A=1-83"/>
</dbReference>
<dbReference type="PDB" id="6OLE">
    <property type="method" value="EM"/>
    <property type="resolution" value="3.10 A"/>
    <property type="chains" value="SV=1-82"/>
</dbReference>
<dbReference type="PDB" id="6OLF">
    <property type="method" value="EM"/>
    <property type="resolution" value="3.90 A"/>
    <property type="chains" value="SV=1-82"/>
</dbReference>
<dbReference type="PDB" id="6OLG">
    <property type="method" value="EM"/>
    <property type="resolution" value="3.40 A"/>
    <property type="chains" value="BV=1-81"/>
</dbReference>
<dbReference type="PDB" id="6OLI">
    <property type="method" value="EM"/>
    <property type="resolution" value="3.50 A"/>
    <property type="chains" value="SV=1-82"/>
</dbReference>
<dbReference type="PDB" id="6OLZ">
    <property type="method" value="EM"/>
    <property type="resolution" value="3.90 A"/>
    <property type="chains" value="BV=1-81"/>
</dbReference>
<dbReference type="PDB" id="6OM0">
    <property type="method" value="EM"/>
    <property type="resolution" value="3.10 A"/>
    <property type="chains" value="SV=1-82"/>
</dbReference>
<dbReference type="PDB" id="6OM7">
    <property type="method" value="EM"/>
    <property type="resolution" value="3.70 A"/>
    <property type="chains" value="SV=1-82"/>
</dbReference>
<dbReference type="PDB" id="6QZP">
    <property type="method" value="EM"/>
    <property type="resolution" value="2.90 A"/>
    <property type="chains" value="SV=1-83"/>
</dbReference>
<dbReference type="PDB" id="6XA1">
    <property type="method" value="EM"/>
    <property type="resolution" value="2.80 A"/>
    <property type="chains" value="SV=1-83"/>
</dbReference>
<dbReference type="PDB" id="6Y0G">
    <property type="method" value="EM"/>
    <property type="resolution" value="3.20 A"/>
    <property type="chains" value="SV=1-83"/>
</dbReference>
<dbReference type="PDB" id="6Y2L">
    <property type="method" value="EM"/>
    <property type="resolution" value="3.00 A"/>
    <property type="chains" value="SV=1-83"/>
</dbReference>
<dbReference type="PDB" id="6Y57">
    <property type="method" value="EM"/>
    <property type="resolution" value="3.50 A"/>
    <property type="chains" value="SV=1-83"/>
</dbReference>
<dbReference type="PDB" id="6YBD">
    <property type="method" value="EM"/>
    <property type="resolution" value="3.30 A"/>
    <property type="chains" value="K=1-83"/>
</dbReference>
<dbReference type="PDB" id="6YBW">
    <property type="method" value="EM"/>
    <property type="resolution" value="3.10 A"/>
    <property type="chains" value="K=1-83"/>
</dbReference>
<dbReference type="PDB" id="6Z6L">
    <property type="method" value="EM"/>
    <property type="resolution" value="3.00 A"/>
    <property type="chains" value="SV=1-83"/>
</dbReference>
<dbReference type="PDB" id="6Z6M">
    <property type="method" value="EM"/>
    <property type="resolution" value="3.10 A"/>
    <property type="chains" value="SV=1-83"/>
</dbReference>
<dbReference type="PDB" id="6Z6N">
    <property type="method" value="EM"/>
    <property type="resolution" value="2.90 A"/>
    <property type="chains" value="SV=1-83"/>
</dbReference>
<dbReference type="PDB" id="6ZLW">
    <property type="method" value="EM"/>
    <property type="resolution" value="2.60 A"/>
    <property type="chains" value="Z=1-83"/>
</dbReference>
<dbReference type="PDB" id="6ZM7">
    <property type="method" value="EM"/>
    <property type="resolution" value="2.70 A"/>
    <property type="chains" value="SV=1-83"/>
</dbReference>
<dbReference type="PDB" id="6ZME">
    <property type="method" value="EM"/>
    <property type="resolution" value="3.00 A"/>
    <property type="chains" value="SV=1-83"/>
</dbReference>
<dbReference type="PDB" id="6ZMI">
    <property type="method" value="EM"/>
    <property type="resolution" value="2.60 A"/>
    <property type="chains" value="SV=1-83"/>
</dbReference>
<dbReference type="PDB" id="6ZMO">
    <property type="method" value="EM"/>
    <property type="resolution" value="3.10 A"/>
    <property type="chains" value="SV=1-83"/>
</dbReference>
<dbReference type="PDB" id="6ZMT">
    <property type="method" value="EM"/>
    <property type="resolution" value="3.00 A"/>
    <property type="chains" value="Z=1-83"/>
</dbReference>
<dbReference type="PDB" id="6ZMW">
    <property type="method" value="EM"/>
    <property type="resolution" value="3.70 A"/>
    <property type="chains" value="K=1-83"/>
</dbReference>
<dbReference type="PDB" id="6ZN5">
    <property type="method" value="EM"/>
    <property type="resolution" value="3.20 A"/>
    <property type="chains" value="Z=1-82"/>
</dbReference>
<dbReference type="PDB" id="6ZOJ">
    <property type="method" value="EM"/>
    <property type="resolution" value="2.80 A"/>
    <property type="chains" value="V=1-83"/>
</dbReference>
<dbReference type="PDB" id="6ZOK">
    <property type="method" value="EM"/>
    <property type="resolution" value="2.80 A"/>
    <property type="chains" value="V=1-83"/>
</dbReference>
<dbReference type="PDB" id="6ZON">
    <property type="method" value="EM"/>
    <property type="resolution" value="3.00 A"/>
    <property type="chains" value="y=1-83"/>
</dbReference>
<dbReference type="PDB" id="6ZP4">
    <property type="method" value="EM"/>
    <property type="resolution" value="2.90 A"/>
    <property type="chains" value="y=1-83"/>
</dbReference>
<dbReference type="PDB" id="6ZUO">
    <property type="method" value="EM"/>
    <property type="resolution" value="3.10 A"/>
    <property type="chains" value="V=1-83"/>
</dbReference>
<dbReference type="PDB" id="6ZV6">
    <property type="method" value="EM"/>
    <property type="resolution" value="2.90 A"/>
    <property type="chains" value="V=1-83"/>
</dbReference>
<dbReference type="PDB" id="6ZVH">
    <property type="method" value="EM"/>
    <property type="resolution" value="2.90 A"/>
    <property type="chains" value="V=1-83"/>
</dbReference>
<dbReference type="PDB" id="6ZVJ">
    <property type="method" value="EM"/>
    <property type="resolution" value="3.80 A"/>
    <property type="chains" value="y=1-82"/>
</dbReference>
<dbReference type="PDB" id="6ZXD">
    <property type="method" value="EM"/>
    <property type="resolution" value="3.20 A"/>
    <property type="chains" value="V=1-83"/>
</dbReference>
<dbReference type="PDB" id="6ZXE">
    <property type="method" value="EM"/>
    <property type="resolution" value="3.00 A"/>
    <property type="chains" value="V=1-83"/>
</dbReference>
<dbReference type="PDB" id="6ZXF">
    <property type="method" value="EM"/>
    <property type="resolution" value="3.70 A"/>
    <property type="chains" value="V=1-83"/>
</dbReference>
<dbReference type="PDB" id="6ZXG">
    <property type="method" value="EM"/>
    <property type="resolution" value="2.60 A"/>
    <property type="chains" value="V=1-83"/>
</dbReference>
<dbReference type="PDB" id="6ZXH">
    <property type="method" value="EM"/>
    <property type="resolution" value="2.70 A"/>
    <property type="chains" value="V=1-83"/>
</dbReference>
<dbReference type="PDB" id="7A09">
    <property type="method" value="EM"/>
    <property type="resolution" value="3.50 A"/>
    <property type="chains" value="y=1-83"/>
</dbReference>
<dbReference type="PDB" id="7JQB">
    <property type="method" value="EM"/>
    <property type="resolution" value="2.70 A"/>
    <property type="chains" value="W=1-83"/>
</dbReference>
<dbReference type="PDB" id="7JQC">
    <property type="method" value="EM"/>
    <property type="resolution" value="3.30 A"/>
    <property type="chains" value="W=1-83"/>
</dbReference>
<dbReference type="PDB" id="7K5I">
    <property type="method" value="EM"/>
    <property type="resolution" value="2.90 A"/>
    <property type="chains" value="V=1-83"/>
</dbReference>
<dbReference type="PDB" id="7QP6">
    <property type="method" value="EM"/>
    <property type="resolution" value="4.70 A"/>
    <property type="chains" value="K=1-83"/>
</dbReference>
<dbReference type="PDB" id="7QP7">
    <property type="method" value="EM"/>
    <property type="resolution" value="3.70 A"/>
    <property type="chains" value="K=1-83"/>
</dbReference>
<dbReference type="PDB" id="7QVP">
    <property type="method" value="EM"/>
    <property type="resolution" value="3.00 A"/>
    <property type="chains" value="RV/SV=1-83"/>
</dbReference>
<dbReference type="PDB" id="7R4X">
    <property type="method" value="EM"/>
    <property type="resolution" value="2.15 A"/>
    <property type="chains" value="V=1-83"/>
</dbReference>
<dbReference type="PDB" id="7TQL">
    <property type="method" value="EM"/>
    <property type="resolution" value="3.40 A"/>
    <property type="chains" value="Z=1-82"/>
</dbReference>
<dbReference type="PDB" id="7WTV">
    <property type="method" value="EM"/>
    <property type="resolution" value="3.50 A"/>
    <property type="chains" value="V=1-83"/>
</dbReference>
<dbReference type="PDB" id="7WTW">
    <property type="method" value="EM"/>
    <property type="resolution" value="3.20 A"/>
    <property type="chains" value="V=1-83"/>
</dbReference>
<dbReference type="PDB" id="7WTX">
    <property type="method" value="EM"/>
    <property type="resolution" value="3.10 A"/>
    <property type="chains" value="V=1-83"/>
</dbReference>
<dbReference type="PDB" id="7WTZ">
    <property type="method" value="EM"/>
    <property type="resolution" value="3.00 A"/>
    <property type="chains" value="V=1-83"/>
</dbReference>
<dbReference type="PDB" id="7WU0">
    <property type="method" value="EM"/>
    <property type="resolution" value="3.30 A"/>
    <property type="chains" value="V=1-83"/>
</dbReference>
<dbReference type="PDB" id="7XNX">
    <property type="method" value="EM"/>
    <property type="resolution" value="2.70 A"/>
    <property type="chains" value="SV=1-83"/>
</dbReference>
<dbReference type="PDB" id="7XNY">
    <property type="method" value="EM"/>
    <property type="resolution" value="2.50 A"/>
    <property type="chains" value="SV=1-83"/>
</dbReference>
<dbReference type="PDB" id="8G5Y">
    <property type="method" value="EM"/>
    <property type="resolution" value="2.29 A"/>
    <property type="chains" value="SV=1-83"/>
</dbReference>
<dbReference type="PDB" id="8G5Z">
    <property type="method" value="EM"/>
    <property type="resolution" value="2.64 A"/>
    <property type="chains" value="SV=1-83"/>
</dbReference>
<dbReference type="PDB" id="8G60">
    <property type="method" value="EM"/>
    <property type="resolution" value="2.54 A"/>
    <property type="chains" value="SV=1-83"/>
</dbReference>
<dbReference type="PDB" id="8G61">
    <property type="method" value="EM"/>
    <property type="resolution" value="2.94 A"/>
    <property type="chains" value="SV=1-83"/>
</dbReference>
<dbReference type="PDB" id="8G6J">
    <property type="method" value="EM"/>
    <property type="resolution" value="2.80 A"/>
    <property type="chains" value="SV=1-83"/>
</dbReference>
<dbReference type="PDB" id="8GLP">
    <property type="method" value="EM"/>
    <property type="resolution" value="1.67 A"/>
    <property type="chains" value="SV=1-83"/>
</dbReference>
<dbReference type="PDB" id="8IFD">
    <property type="method" value="EM"/>
    <property type="resolution" value="2.59 A"/>
    <property type="chains" value="3A=1-83"/>
</dbReference>
<dbReference type="PDB" id="8IFE">
    <property type="method" value="EM"/>
    <property type="resolution" value="2.57 A"/>
    <property type="chains" value="3A=1-83"/>
</dbReference>
<dbReference type="PDB" id="8JDJ">
    <property type="method" value="EM"/>
    <property type="resolution" value="2.50 A"/>
    <property type="chains" value="AH=1-83"/>
</dbReference>
<dbReference type="PDB" id="8JDK">
    <property type="method" value="EM"/>
    <property type="resolution" value="2.26 A"/>
    <property type="chains" value="AH=1-83"/>
</dbReference>
<dbReference type="PDB" id="8JDL">
    <property type="method" value="EM"/>
    <property type="resolution" value="2.42 A"/>
    <property type="chains" value="AH=1-83"/>
</dbReference>
<dbReference type="PDB" id="8JDM">
    <property type="method" value="EM"/>
    <property type="resolution" value="2.67 A"/>
    <property type="chains" value="AH=1-83"/>
</dbReference>
<dbReference type="PDB" id="8K2C">
    <property type="method" value="EM"/>
    <property type="resolution" value="2.40 A"/>
    <property type="chains" value="SV=1-83"/>
</dbReference>
<dbReference type="PDB" id="8OZ0">
    <property type="method" value="EM"/>
    <property type="resolution" value="3.50 A"/>
    <property type="chains" value="N=1-83"/>
</dbReference>
<dbReference type="PDB" id="8PJ1">
    <property type="method" value="EM"/>
    <property type="resolution" value="3.40 A"/>
    <property type="chains" value="K=1-83"/>
</dbReference>
<dbReference type="PDB" id="8PJ2">
    <property type="method" value="EM"/>
    <property type="resolution" value="3.40 A"/>
    <property type="chains" value="K=1-83"/>
</dbReference>
<dbReference type="PDB" id="8PJ3">
    <property type="method" value="EM"/>
    <property type="resolution" value="3.70 A"/>
    <property type="chains" value="K=1-83"/>
</dbReference>
<dbReference type="PDB" id="8PJ4">
    <property type="method" value="EM"/>
    <property type="resolution" value="3.20 A"/>
    <property type="chains" value="K=1-83"/>
</dbReference>
<dbReference type="PDB" id="8PJ5">
    <property type="method" value="EM"/>
    <property type="resolution" value="2.90 A"/>
    <property type="chains" value="K=1-83"/>
</dbReference>
<dbReference type="PDB" id="8PJ6">
    <property type="method" value="EM"/>
    <property type="resolution" value="2.90 A"/>
    <property type="chains" value="K=1-83"/>
</dbReference>
<dbReference type="PDB" id="8PPK">
    <property type="method" value="EM"/>
    <property type="resolution" value="2.98 A"/>
    <property type="chains" value="V=1-83"/>
</dbReference>
<dbReference type="PDB" id="8PPL">
    <property type="method" value="EM"/>
    <property type="resolution" value="2.65 A"/>
    <property type="chains" value="AV=1-83"/>
</dbReference>
<dbReference type="PDB" id="8QOI">
    <property type="method" value="EM"/>
    <property type="resolution" value="1.90 A"/>
    <property type="chains" value="SV=1-83"/>
</dbReference>
<dbReference type="PDB" id="8T4S">
    <property type="method" value="EM"/>
    <property type="resolution" value="2.60 A"/>
    <property type="chains" value="V=1-83"/>
</dbReference>
<dbReference type="PDB" id="8UKB">
    <property type="method" value="EM"/>
    <property type="resolution" value="3.05 A"/>
    <property type="chains" value="SV=1-83"/>
</dbReference>
<dbReference type="PDB" id="8XP2">
    <property type="method" value="EM"/>
    <property type="resolution" value="3.20 A"/>
    <property type="chains" value="SV=1-83"/>
</dbReference>
<dbReference type="PDB" id="8XP3">
    <property type="method" value="EM"/>
    <property type="resolution" value="3.40 A"/>
    <property type="chains" value="SV=1-83"/>
</dbReference>
<dbReference type="PDB" id="8XSX">
    <property type="method" value="EM"/>
    <property type="resolution" value="2.40 A"/>
    <property type="chains" value="SV=1-83"/>
</dbReference>
<dbReference type="PDB" id="8XSY">
    <property type="method" value="EM"/>
    <property type="resolution" value="3.00 A"/>
    <property type="chains" value="SV=1-83"/>
</dbReference>
<dbReference type="PDB" id="8XSZ">
    <property type="method" value="EM"/>
    <property type="resolution" value="3.20 A"/>
    <property type="chains" value="SV=1-83"/>
</dbReference>
<dbReference type="PDB" id="8XXL">
    <property type="method" value="EM"/>
    <property type="resolution" value="2.90 A"/>
    <property type="chains" value="SV=1-83"/>
</dbReference>
<dbReference type="PDB" id="8XXM">
    <property type="method" value="EM"/>
    <property type="resolution" value="3.20 A"/>
    <property type="chains" value="SV=1-83"/>
</dbReference>
<dbReference type="PDB" id="8XXN">
    <property type="method" value="EM"/>
    <property type="resolution" value="3.60 A"/>
    <property type="chains" value="SV=1-83"/>
</dbReference>
<dbReference type="PDB" id="8Y0W">
    <property type="method" value="EM"/>
    <property type="resolution" value="3.40 A"/>
    <property type="chains" value="SV=1-83"/>
</dbReference>
<dbReference type="PDB" id="8Y0X">
    <property type="method" value="EM"/>
    <property type="resolution" value="3.30 A"/>
    <property type="chains" value="SV=1-83"/>
</dbReference>
<dbReference type="PDB" id="8YOO">
    <property type="method" value="EM"/>
    <property type="resolution" value="2.00 A"/>
    <property type="chains" value="SV=1-83"/>
</dbReference>
<dbReference type="PDB" id="8YOP">
    <property type="method" value="EM"/>
    <property type="resolution" value="2.20 A"/>
    <property type="chains" value="SV=1-83"/>
</dbReference>
<dbReference type="PDB" id="8ZDB">
    <property type="method" value="EM"/>
    <property type="resolution" value="3.60 A"/>
    <property type="chains" value="V=1-83"/>
</dbReference>
<dbReference type="PDB" id="8ZDC">
    <property type="method" value="EM"/>
    <property type="resolution" value="3.80 A"/>
    <property type="chains" value="V=1-83"/>
</dbReference>
<dbReference type="PDB" id="8ZDD">
    <property type="method" value="EM"/>
    <property type="resolution" value="3.70 A"/>
    <property type="chains" value="V=1-83"/>
</dbReference>
<dbReference type="PDB" id="9BKD">
    <property type="method" value="EM"/>
    <property type="resolution" value="2.60 A"/>
    <property type="chains" value="K=1-83"/>
</dbReference>
<dbReference type="PDB" id="9BLN">
    <property type="method" value="EM"/>
    <property type="resolution" value="3.90 A"/>
    <property type="chains" value="K=1-83"/>
</dbReference>
<dbReference type="PDB" id="9C3H">
    <property type="method" value="EM"/>
    <property type="resolution" value="2.00 A"/>
    <property type="chains" value="SV=1-83"/>
</dbReference>
<dbReference type="PDB" id="9G8M">
    <property type="method" value="EM"/>
    <property type="resolution" value="3.30 A"/>
    <property type="chains" value="SV=1-83"/>
</dbReference>
<dbReference type="PDB" id="9G8O">
    <property type="method" value="EM"/>
    <property type="resolution" value="3.40 A"/>
    <property type="chains" value="SV=1-83"/>
</dbReference>
<dbReference type="PDBsum" id="4UG0"/>
<dbReference type="PDBsum" id="4V6X"/>
<dbReference type="PDBsum" id="5A2Q"/>
<dbReference type="PDBsum" id="5AJ0"/>
<dbReference type="PDBsum" id="5FLX"/>
<dbReference type="PDBsum" id="5LKS"/>
<dbReference type="PDBsum" id="5OA3"/>
<dbReference type="PDBsum" id="5T2C"/>
<dbReference type="PDBsum" id="5VYC"/>
<dbReference type="PDBsum" id="6G18"/>
<dbReference type="PDBsum" id="6G4S"/>
<dbReference type="PDBsum" id="6G51"/>
<dbReference type="PDBsum" id="6G53"/>
<dbReference type="PDBsum" id="6G5H"/>
<dbReference type="PDBsum" id="6G5I"/>
<dbReference type="PDBsum" id="6IP5"/>
<dbReference type="PDBsum" id="6IP6"/>
<dbReference type="PDBsum" id="6IP8"/>
<dbReference type="PDBsum" id="6OLE"/>
<dbReference type="PDBsum" id="6OLF"/>
<dbReference type="PDBsum" id="6OLG"/>
<dbReference type="PDBsum" id="6OLI"/>
<dbReference type="PDBsum" id="6OLZ"/>
<dbReference type="PDBsum" id="6OM0"/>
<dbReference type="PDBsum" id="6OM7"/>
<dbReference type="PDBsum" id="6QZP"/>
<dbReference type="PDBsum" id="6XA1"/>
<dbReference type="PDBsum" id="6Y0G"/>
<dbReference type="PDBsum" id="6Y2L"/>
<dbReference type="PDBsum" id="6Y57"/>
<dbReference type="PDBsum" id="6YBD"/>
<dbReference type="PDBsum" id="6YBW"/>
<dbReference type="PDBsum" id="6Z6L"/>
<dbReference type="PDBsum" id="6Z6M"/>
<dbReference type="PDBsum" id="6Z6N"/>
<dbReference type="PDBsum" id="6ZLW"/>
<dbReference type="PDBsum" id="6ZM7"/>
<dbReference type="PDBsum" id="6ZME"/>
<dbReference type="PDBsum" id="6ZMI"/>
<dbReference type="PDBsum" id="6ZMO"/>
<dbReference type="PDBsum" id="6ZMT"/>
<dbReference type="PDBsum" id="6ZMW"/>
<dbReference type="PDBsum" id="6ZN5"/>
<dbReference type="PDBsum" id="6ZOJ"/>
<dbReference type="PDBsum" id="6ZOK"/>
<dbReference type="PDBsum" id="6ZON"/>
<dbReference type="PDBsum" id="6ZP4"/>
<dbReference type="PDBsum" id="6ZUO"/>
<dbReference type="PDBsum" id="6ZV6"/>
<dbReference type="PDBsum" id="6ZVH"/>
<dbReference type="PDBsum" id="6ZVJ"/>
<dbReference type="PDBsum" id="6ZXD"/>
<dbReference type="PDBsum" id="6ZXE"/>
<dbReference type="PDBsum" id="6ZXF"/>
<dbReference type="PDBsum" id="6ZXG"/>
<dbReference type="PDBsum" id="6ZXH"/>
<dbReference type="PDBsum" id="7A09"/>
<dbReference type="PDBsum" id="7JQB"/>
<dbReference type="PDBsum" id="7JQC"/>
<dbReference type="PDBsum" id="7K5I"/>
<dbReference type="PDBsum" id="7QP6"/>
<dbReference type="PDBsum" id="7QP7"/>
<dbReference type="PDBsum" id="7QVP"/>
<dbReference type="PDBsum" id="7R4X"/>
<dbReference type="PDBsum" id="7TQL"/>
<dbReference type="PDBsum" id="7WTV"/>
<dbReference type="PDBsum" id="7WTW"/>
<dbReference type="PDBsum" id="7WTX"/>
<dbReference type="PDBsum" id="7WTZ"/>
<dbReference type="PDBsum" id="7WU0"/>
<dbReference type="PDBsum" id="7XNX"/>
<dbReference type="PDBsum" id="7XNY"/>
<dbReference type="PDBsum" id="8G5Y"/>
<dbReference type="PDBsum" id="8G5Z"/>
<dbReference type="PDBsum" id="8G60"/>
<dbReference type="PDBsum" id="8G61"/>
<dbReference type="PDBsum" id="8G6J"/>
<dbReference type="PDBsum" id="8GLP"/>
<dbReference type="PDBsum" id="8IFD"/>
<dbReference type="PDBsum" id="8IFE"/>
<dbReference type="PDBsum" id="8JDJ"/>
<dbReference type="PDBsum" id="8JDK"/>
<dbReference type="PDBsum" id="8JDL"/>
<dbReference type="PDBsum" id="8JDM"/>
<dbReference type="PDBsum" id="8K2C"/>
<dbReference type="PDBsum" id="8OZ0"/>
<dbReference type="PDBsum" id="8PJ1"/>
<dbReference type="PDBsum" id="8PJ2"/>
<dbReference type="PDBsum" id="8PJ3"/>
<dbReference type="PDBsum" id="8PJ4"/>
<dbReference type="PDBsum" id="8PJ5"/>
<dbReference type="PDBsum" id="8PJ6"/>
<dbReference type="PDBsum" id="8PPK"/>
<dbReference type="PDBsum" id="8PPL"/>
<dbReference type="PDBsum" id="8QOI"/>
<dbReference type="PDBsum" id="8T4S"/>
<dbReference type="PDBsum" id="8UKB"/>
<dbReference type="PDBsum" id="8XP2"/>
<dbReference type="PDBsum" id="8XP3"/>
<dbReference type="PDBsum" id="8XSX"/>
<dbReference type="PDBsum" id="8XSY"/>
<dbReference type="PDBsum" id="8XSZ"/>
<dbReference type="PDBsum" id="8XXL"/>
<dbReference type="PDBsum" id="8XXM"/>
<dbReference type="PDBsum" id="8XXN"/>
<dbReference type="PDBsum" id="8Y0W"/>
<dbReference type="PDBsum" id="8Y0X"/>
<dbReference type="PDBsum" id="8YOO"/>
<dbReference type="PDBsum" id="8YOP"/>
<dbReference type="PDBsum" id="8ZDB"/>
<dbReference type="PDBsum" id="8ZDC"/>
<dbReference type="PDBsum" id="8ZDD"/>
<dbReference type="PDBsum" id="9BKD"/>
<dbReference type="PDBsum" id="9BLN"/>
<dbReference type="PDBsum" id="9C3H"/>
<dbReference type="PDBsum" id="9G8M"/>
<dbReference type="PDBsum" id="9G8O"/>
<dbReference type="EMDB" id="EMD-10668"/>
<dbReference type="EMDB" id="EMD-10674"/>
<dbReference type="EMDB" id="EMD-10690"/>
<dbReference type="EMDB" id="EMD-10769"/>
<dbReference type="EMDB" id="EMD-10775"/>
<dbReference type="EMDB" id="EMD-11098"/>
<dbReference type="EMDB" id="EMD-11099"/>
<dbReference type="EMDB" id="EMD-11100"/>
<dbReference type="EMDB" id="EMD-11276"/>
<dbReference type="EMDB" id="EMD-11288"/>
<dbReference type="EMDB" id="EMD-11289"/>
<dbReference type="EMDB" id="EMD-11292"/>
<dbReference type="EMDB" id="EMD-11299"/>
<dbReference type="EMDB" id="EMD-11301"/>
<dbReference type="EMDB" id="EMD-11302"/>
<dbReference type="EMDB" id="EMD-11310"/>
<dbReference type="EMDB" id="EMD-11320"/>
<dbReference type="EMDB" id="EMD-11321"/>
<dbReference type="EMDB" id="EMD-11325"/>
<dbReference type="EMDB" id="EMD-11335"/>
<dbReference type="EMDB" id="EMD-11440"/>
<dbReference type="EMDB" id="EMD-11441"/>
<dbReference type="EMDB" id="EMD-11456"/>
<dbReference type="EMDB" id="EMD-11458"/>
<dbReference type="EMDB" id="EMD-11517"/>
<dbReference type="EMDB" id="EMD-11518"/>
<dbReference type="EMDB" id="EMD-11519"/>
<dbReference type="EMDB" id="EMD-11520"/>
<dbReference type="EMDB" id="EMD-11521"/>
<dbReference type="EMDB" id="EMD-11602"/>
<dbReference type="EMDB" id="EMD-14113"/>
<dbReference type="EMDB" id="EMD-14114"/>
<dbReference type="EMDB" id="EMD-14181"/>
<dbReference type="EMDB" id="EMD-14317"/>
<dbReference type="EMDB" id="EMD-17297"/>
<dbReference type="EMDB" id="EMD-17696"/>
<dbReference type="EMDB" id="EMD-17697"/>
<dbReference type="EMDB" id="EMD-17698"/>
<dbReference type="EMDB" id="EMD-17699"/>
<dbReference type="EMDB" id="EMD-17700"/>
<dbReference type="EMDB" id="EMD-17701"/>
<dbReference type="EMDB" id="EMD-17804"/>
<dbReference type="EMDB" id="EMD-17805"/>
<dbReference type="EMDB" id="EMD-18539"/>
<dbReference type="EMDB" id="EMD-22681"/>
<dbReference type="EMDB" id="EMD-26067"/>
<dbReference type="EMDB" id="EMD-29757"/>
<dbReference type="EMDB" id="EMD-29758"/>
<dbReference type="EMDB" id="EMD-29759"/>
<dbReference type="EMDB" id="EMD-29760"/>
<dbReference type="EMDB" id="EMD-29771"/>
<dbReference type="EMDB" id="EMD-32802"/>
<dbReference type="EMDB" id="EMD-32803"/>
<dbReference type="EMDB" id="EMD-32804"/>
<dbReference type="EMDB" id="EMD-32806"/>
<dbReference type="EMDB" id="EMD-32807"/>
<dbReference type="EMDB" id="EMD-33329"/>
<dbReference type="EMDB" id="EMD-33330"/>
<dbReference type="EMDB" id="EMD-35413"/>
<dbReference type="EMDB" id="EMD-35414"/>
<dbReference type="EMDB" id="EMD-36178"/>
<dbReference type="EMDB" id="EMD-36179"/>
<dbReference type="EMDB" id="EMD-36180"/>
<dbReference type="EMDB" id="EMD-36181"/>
<dbReference type="EMDB" id="EMD-36838"/>
<dbReference type="EMDB" id="EMD-3770"/>
<dbReference type="EMDB" id="EMD-38548"/>
<dbReference type="EMDB" id="EMD-38549"/>
<dbReference type="EMDB" id="EMD-38629"/>
<dbReference type="EMDB" id="EMD-38630"/>
<dbReference type="EMDB" id="EMD-38631"/>
<dbReference type="EMDB" id="EMD-38752"/>
<dbReference type="EMDB" id="EMD-38753"/>
<dbReference type="EMDB" id="EMD-38754"/>
<dbReference type="EMDB" id="EMD-3883"/>
<dbReference type="EMDB" id="EMD-39455"/>
<dbReference type="EMDB" id="EMD-39456"/>
<dbReference type="EMDB" id="EMD-39956"/>
<dbReference type="EMDB" id="EMD-39957"/>
<dbReference type="EMDB" id="EMD-39958"/>
<dbReference type="EMDB" id="EMD-40205"/>
<dbReference type="EMDB" id="EMD-4070"/>
<dbReference type="EMDB" id="EMD-41039"/>
<dbReference type="EMDB" id="EMD-42351"/>
<dbReference type="EMDB" id="EMD-4337"/>
<dbReference type="EMDB" id="EMD-4348"/>
<dbReference type="EMDB" id="EMD-4350"/>
<dbReference type="EMDB" id="EMD-4351"/>
<dbReference type="EMDB" id="EMD-4352"/>
<dbReference type="EMDB" id="EMD-4353"/>
<dbReference type="EMDB" id="EMD-44641"/>
<dbReference type="EMDB" id="EMD-44671"/>
<dbReference type="EMDB" id="EMD-45170"/>
<dbReference type="EMDB" id="EMD-51132"/>
<dbReference type="EMDB" id="EMD-51134"/>
<dbReference type="EMDB" id="EMD-9701"/>
<dbReference type="EMDB" id="EMD-9702"/>
<dbReference type="EMDB" id="EMD-9703"/>
<dbReference type="SMR" id="P63220"/>
<dbReference type="BioGRID" id="112141">
    <property type="interactions" value="273"/>
</dbReference>
<dbReference type="ComplexPortal" id="CPX-5223">
    <property type="entry name" value="40S cytosolic small ribosomal subunit"/>
</dbReference>
<dbReference type="CORUM" id="P63220"/>
<dbReference type="FunCoup" id="P63220">
    <property type="interactions" value="1700"/>
</dbReference>
<dbReference type="IntAct" id="P63220">
    <property type="interactions" value="77"/>
</dbReference>
<dbReference type="MINT" id="P63220"/>
<dbReference type="STRING" id="9606.ENSP00000345957"/>
<dbReference type="GlyGen" id="P63220">
    <property type="glycosylation" value="1 site, 1 O-linked glycan (1 site)"/>
</dbReference>
<dbReference type="iPTMnet" id="P63220"/>
<dbReference type="MetOSite" id="P63220"/>
<dbReference type="PhosphoSitePlus" id="P63220"/>
<dbReference type="SwissPalm" id="P63220"/>
<dbReference type="BioMuta" id="RPS21"/>
<dbReference type="DMDM" id="52783792"/>
<dbReference type="jPOST" id="P63220"/>
<dbReference type="MassIVE" id="P63220"/>
<dbReference type="PaxDb" id="9606-ENSP00000345957"/>
<dbReference type="PeptideAtlas" id="P63220"/>
<dbReference type="ProteomicsDB" id="57509"/>
<dbReference type="Pumba" id="P63220"/>
<dbReference type="TopDownProteomics" id="P63220"/>
<dbReference type="Antibodypedia" id="1249">
    <property type="antibodies" value="147 antibodies from 28 providers"/>
</dbReference>
<dbReference type="DNASU" id="6227"/>
<dbReference type="Ensembl" id="ENST00000343986.9">
    <property type="protein sequence ID" value="ENSP00000345957.3"/>
    <property type="gene ID" value="ENSG00000171858.18"/>
</dbReference>
<dbReference type="GeneID" id="6227"/>
<dbReference type="KEGG" id="hsa:6227"/>
<dbReference type="MANE-Select" id="ENST00000343986.9">
    <property type="protein sequence ID" value="ENSP00000345957.3"/>
    <property type="RefSeq nucleotide sequence ID" value="NM_001024.4"/>
    <property type="RefSeq protein sequence ID" value="NP_001015.1"/>
</dbReference>
<dbReference type="AGR" id="HGNC:10409"/>
<dbReference type="CTD" id="6227"/>
<dbReference type="DisGeNET" id="6227"/>
<dbReference type="GeneCards" id="RPS21"/>
<dbReference type="HGNC" id="HGNC:10409">
    <property type="gene designation" value="RPS21"/>
</dbReference>
<dbReference type="HPA" id="ENSG00000171858">
    <property type="expression patterns" value="Low tissue specificity"/>
</dbReference>
<dbReference type="MIM" id="180477">
    <property type="type" value="gene"/>
</dbReference>
<dbReference type="neXtProt" id="NX_P63220"/>
<dbReference type="OpenTargets" id="ENSG00000171858"/>
<dbReference type="PharmGKB" id="PA34812"/>
<dbReference type="VEuPathDB" id="HostDB:ENSG00000171858"/>
<dbReference type="eggNOG" id="KOG3486">
    <property type="taxonomic scope" value="Eukaryota"/>
</dbReference>
<dbReference type="GeneTree" id="ENSGT00390000017515"/>
<dbReference type="InParanoid" id="P63220"/>
<dbReference type="OMA" id="GESDACM"/>
<dbReference type="OrthoDB" id="278325at2759"/>
<dbReference type="PAN-GO" id="P63220">
    <property type="GO annotations" value="4 GO annotations based on evolutionary models"/>
</dbReference>
<dbReference type="PhylomeDB" id="P63220"/>
<dbReference type="TreeFam" id="TF300167"/>
<dbReference type="PathwayCommons" id="P63220"/>
<dbReference type="Reactome" id="R-HSA-156827">
    <property type="pathway name" value="L13a-mediated translational silencing of Ceruloplasmin expression"/>
</dbReference>
<dbReference type="Reactome" id="R-HSA-156902">
    <property type="pathway name" value="Peptide chain elongation"/>
</dbReference>
<dbReference type="Reactome" id="R-HSA-1799339">
    <property type="pathway name" value="SRP-dependent cotranslational protein targeting to membrane"/>
</dbReference>
<dbReference type="Reactome" id="R-HSA-192823">
    <property type="pathway name" value="Viral mRNA Translation"/>
</dbReference>
<dbReference type="Reactome" id="R-HSA-2408557">
    <property type="pathway name" value="Selenocysteine synthesis"/>
</dbReference>
<dbReference type="Reactome" id="R-HSA-6791226">
    <property type="pathway name" value="Major pathway of rRNA processing in the nucleolus and cytosol"/>
</dbReference>
<dbReference type="Reactome" id="R-HSA-72649">
    <property type="pathway name" value="Translation initiation complex formation"/>
</dbReference>
<dbReference type="Reactome" id="R-HSA-72689">
    <property type="pathway name" value="Formation of a pool of free 40S subunits"/>
</dbReference>
<dbReference type="Reactome" id="R-HSA-72695">
    <property type="pathway name" value="Formation of the ternary complex, and subsequently, the 43S complex"/>
</dbReference>
<dbReference type="Reactome" id="R-HSA-72702">
    <property type="pathway name" value="Ribosomal scanning and start codon recognition"/>
</dbReference>
<dbReference type="Reactome" id="R-HSA-72706">
    <property type="pathway name" value="GTP hydrolysis and joining of the 60S ribosomal subunit"/>
</dbReference>
<dbReference type="Reactome" id="R-HSA-72764">
    <property type="pathway name" value="Eukaryotic Translation Termination"/>
</dbReference>
<dbReference type="Reactome" id="R-HSA-9010553">
    <property type="pathway name" value="Regulation of expression of SLITs and ROBOs"/>
</dbReference>
<dbReference type="Reactome" id="R-HSA-9633012">
    <property type="pathway name" value="Response of EIF2AK4 (GCN2) to amino acid deficiency"/>
</dbReference>
<dbReference type="Reactome" id="R-HSA-9735869">
    <property type="pathway name" value="SARS-CoV-1 modulates host translation machinery"/>
</dbReference>
<dbReference type="Reactome" id="R-HSA-9754678">
    <property type="pathway name" value="SARS-CoV-2 modulates host translation machinery"/>
</dbReference>
<dbReference type="Reactome" id="R-HSA-975956">
    <property type="pathway name" value="Nonsense Mediated Decay (NMD) independent of the Exon Junction Complex (EJC)"/>
</dbReference>
<dbReference type="Reactome" id="R-HSA-975957">
    <property type="pathway name" value="Nonsense Mediated Decay (NMD) enhanced by the Exon Junction Complex (EJC)"/>
</dbReference>
<dbReference type="SignaLink" id="P63220"/>
<dbReference type="SIGNOR" id="P63220"/>
<dbReference type="BioGRID-ORCS" id="6227">
    <property type="hits" value="713 hits in 1162 CRISPR screens"/>
</dbReference>
<dbReference type="ChiTaRS" id="RPS21">
    <property type="organism name" value="human"/>
</dbReference>
<dbReference type="EvolutionaryTrace" id="P63220"/>
<dbReference type="GeneWiki" id="RPS21"/>
<dbReference type="GenomeRNAi" id="6227"/>
<dbReference type="Pharos" id="P63220">
    <property type="development level" value="Tbio"/>
</dbReference>
<dbReference type="PRO" id="PR:P63220"/>
<dbReference type="Proteomes" id="UP000005640">
    <property type="component" value="Chromosome 20"/>
</dbReference>
<dbReference type="RNAct" id="P63220">
    <property type="molecule type" value="protein"/>
</dbReference>
<dbReference type="Bgee" id="ENSG00000171858">
    <property type="expression patterns" value="Expressed in nipple and 209 other cell types or tissues"/>
</dbReference>
<dbReference type="ExpressionAtlas" id="P63220">
    <property type="expression patterns" value="baseline and differential"/>
</dbReference>
<dbReference type="GO" id="GO:0005737">
    <property type="term" value="C:cytoplasm"/>
    <property type="evidence" value="ECO:0000303"/>
    <property type="project" value="ComplexPortal"/>
</dbReference>
<dbReference type="GO" id="GO:0005829">
    <property type="term" value="C:cytosol"/>
    <property type="evidence" value="ECO:0000314"/>
    <property type="project" value="HPA"/>
</dbReference>
<dbReference type="GO" id="GO:0022626">
    <property type="term" value="C:cytosolic ribosome"/>
    <property type="evidence" value="ECO:0000314"/>
    <property type="project" value="FlyBase"/>
</dbReference>
<dbReference type="GO" id="GO:0022627">
    <property type="term" value="C:cytosolic small ribosomal subunit"/>
    <property type="evidence" value="ECO:0000314"/>
    <property type="project" value="UniProtKB"/>
</dbReference>
<dbReference type="GO" id="GO:0005783">
    <property type="term" value="C:endoplasmic reticulum"/>
    <property type="evidence" value="ECO:0000314"/>
    <property type="project" value="HPA"/>
</dbReference>
<dbReference type="GO" id="GO:0005654">
    <property type="term" value="C:nucleoplasm"/>
    <property type="evidence" value="ECO:0000304"/>
    <property type="project" value="Reactome"/>
</dbReference>
<dbReference type="GO" id="GO:0005791">
    <property type="term" value="C:rough endoplasmic reticulum"/>
    <property type="evidence" value="ECO:0007669"/>
    <property type="project" value="UniProtKB-SubCell"/>
</dbReference>
<dbReference type="GO" id="GO:0015935">
    <property type="term" value="C:small ribosomal subunit"/>
    <property type="evidence" value="ECO:0007005"/>
    <property type="project" value="UniProtKB"/>
</dbReference>
<dbReference type="GO" id="GO:0045202">
    <property type="term" value="C:synapse"/>
    <property type="evidence" value="ECO:0007669"/>
    <property type="project" value="Ensembl"/>
</dbReference>
<dbReference type="GO" id="GO:0003723">
    <property type="term" value="F:RNA binding"/>
    <property type="evidence" value="ECO:0007005"/>
    <property type="project" value="UniProtKB"/>
</dbReference>
<dbReference type="GO" id="GO:0003735">
    <property type="term" value="F:structural constituent of ribosome"/>
    <property type="evidence" value="ECO:0000314"/>
    <property type="project" value="FlyBase"/>
</dbReference>
<dbReference type="GO" id="GO:0002181">
    <property type="term" value="P:cytoplasmic translation"/>
    <property type="evidence" value="ECO:0000314"/>
    <property type="project" value="UniProtKB"/>
</dbReference>
<dbReference type="GO" id="GO:0000447">
    <property type="term" value="P:endonucleolytic cleavage in ITS1 to separate SSU-rRNA from 5.8S rRNA and LSU-rRNA from tricistronic rRNA transcript (SSU-rRNA, 5.8S rRNA, LSU-rRNA)"/>
    <property type="evidence" value="ECO:0000318"/>
    <property type="project" value="GO_Central"/>
</dbReference>
<dbReference type="GO" id="GO:0000461">
    <property type="term" value="P:endonucleolytic cleavage to generate mature 3'-end of SSU-rRNA from (SSU-rRNA, 5.8S rRNA, LSU-rRNA)"/>
    <property type="evidence" value="ECO:0000318"/>
    <property type="project" value="GO_Central"/>
</dbReference>
<dbReference type="GO" id="GO:0006412">
    <property type="term" value="P:translation"/>
    <property type="evidence" value="ECO:0000303"/>
    <property type="project" value="UniProtKB"/>
</dbReference>
<dbReference type="FunFam" id="3.30.1230.20:FF:000001">
    <property type="entry name" value="40S ribosomal protein S21"/>
    <property type="match status" value="1"/>
</dbReference>
<dbReference type="Gene3D" id="3.30.1230.20">
    <property type="match status" value="1"/>
</dbReference>
<dbReference type="InterPro" id="IPR001931">
    <property type="entry name" value="Ribosomal_eS21"/>
</dbReference>
<dbReference type="InterPro" id="IPR018279">
    <property type="entry name" value="Ribosomal_eS21_CS"/>
</dbReference>
<dbReference type="InterPro" id="IPR038579">
    <property type="entry name" value="Ribosomal_eS21_sf"/>
</dbReference>
<dbReference type="PANTHER" id="PTHR10442">
    <property type="entry name" value="40S RIBOSOMAL PROTEIN S21"/>
    <property type="match status" value="1"/>
</dbReference>
<dbReference type="Pfam" id="PF01249">
    <property type="entry name" value="Ribosomal_S21e"/>
    <property type="match status" value="1"/>
</dbReference>
<dbReference type="PIRSF" id="PIRSF002148">
    <property type="entry name" value="Ribosomal_S21e"/>
    <property type="match status" value="1"/>
</dbReference>
<dbReference type="PROSITE" id="PS00996">
    <property type="entry name" value="RIBOSOMAL_S21E"/>
    <property type="match status" value="1"/>
</dbReference>
<keyword id="KW-0002">3D-structure</keyword>
<keyword id="KW-0007">Acetylation</keyword>
<keyword id="KW-0963">Cytoplasm</keyword>
<keyword id="KW-0903">Direct protein sequencing</keyword>
<keyword id="KW-0256">Endoplasmic reticulum</keyword>
<keyword id="KW-1017">Isopeptide bond</keyword>
<keyword id="KW-1267">Proteomics identification</keyword>
<keyword id="KW-1185">Reference proteome</keyword>
<keyword id="KW-0687">Ribonucleoprotein</keyword>
<keyword id="KW-0689">Ribosomal protein</keyword>
<keyword id="KW-0832">Ubl conjugation</keyword>
<feature type="chain" id="PRO_0000194730" description="Small ribosomal subunit protein eS21">
    <location>
        <begin position="1"/>
        <end position="83"/>
    </location>
</feature>
<feature type="modified residue" description="N-acetylmethionine" evidence="5 12 14 15 17">
    <location>
        <position position="1"/>
    </location>
</feature>
<feature type="modified residue" description="N6-acetyllysine" evidence="13">
    <location>
        <position position="81"/>
    </location>
</feature>
<feature type="cross-link" description="Glycyl lysine isopeptide (Lys-Gly) (interchain with G-Cter in SUMO2)" evidence="16">
    <location>
        <position position="41"/>
    </location>
</feature>
<feature type="strand" evidence="21">
    <location>
        <begin position="4"/>
        <end position="6"/>
    </location>
</feature>
<feature type="turn" evidence="20">
    <location>
        <begin position="18"/>
        <end position="20"/>
    </location>
</feature>
<feature type="strand" evidence="20">
    <location>
        <begin position="32"/>
        <end position="39"/>
    </location>
</feature>
<feature type="turn" evidence="20">
    <location>
        <begin position="41"/>
        <end position="43"/>
    </location>
</feature>
<feature type="strand" evidence="20">
    <location>
        <begin position="46"/>
        <end position="55"/>
    </location>
</feature>
<feature type="helix" evidence="20">
    <location>
        <begin position="57"/>
        <end position="61"/>
    </location>
</feature>
<feature type="turn" evidence="19">
    <location>
        <begin position="62"/>
        <end position="64"/>
    </location>
</feature>
<feature type="helix" evidence="20">
    <location>
        <begin position="65"/>
        <end position="75"/>
    </location>
</feature>
<feature type="strand" evidence="18">
    <location>
        <begin position="76"/>
        <end position="79"/>
    </location>
</feature>
<name>RS21_HUMAN</name>
<accession>P63220</accession>
<accession>P35265</accession>
<comment type="function">
    <text evidence="2 3 4">Component of the small ribosomal subunit (PubMed:23636399, PubMed:25901680, PubMed:25957688). The ribosome is a large ribonucleoprotein complex responsible for the synthesis of proteins in the cell (PubMed:23636399, PubMed:25901680, PubMed:25957688).</text>
</comment>
<comment type="subunit">
    <text evidence="2 3 4">Component of the 40S small ribosomal subunit.</text>
</comment>
<comment type="interaction">
    <interactant intactId="EBI-714051">
        <id>P63220</id>
    </interactant>
    <interactant intactId="EBI-750641">
        <id>Q5TD97</id>
        <label>FHL5</label>
    </interactant>
    <organismsDiffer>false</organismsDiffer>
    <experiments>3</experiments>
</comment>
<comment type="interaction">
    <interactant intactId="EBI-714051">
        <id>P63220</id>
    </interactant>
    <interactant intactId="EBI-742388">
        <id>Q9H8W4</id>
        <label>PLEKHF2</label>
    </interactant>
    <organismsDiffer>false</organismsDiffer>
    <experiments>6</experiments>
</comment>
<comment type="interaction">
    <interactant intactId="EBI-714051">
        <id>P63220</id>
    </interactant>
    <interactant intactId="EBI-354112">
        <id>P08865</id>
        <label>RPSA</label>
    </interactant>
    <organismsDiffer>false</organismsDiffer>
    <experiments>4</experiments>
</comment>
<comment type="interaction">
    <interactant intactId="EBI-714051">
        <id>P63220</id>
    </interactant>
    <interactant intactId="EBI-7254550">
        <id>P36508</id>
        <label>ZNF76</label>
    </interactant>
    <organismsDiffer>false</organismsDiffer>
    <experiments>3</experiments>
</comment>
<comment type="subcellular location">
    <subcellularLocation>
        <location evidence="4">Cytoplasm</location>
        <location evidence="4">Cytosol</location>
    </subcellularLocation>
    <subcellularLocation>
        <location evidence="8 9">Cytoplasm</location>
    </subcellularLocation>
    <subcellularLocation>
        <location evidence="1">Rough endoplasmic reticulum</location>
    </subcellularLocation>
    <text evidence="1 4">Detected on cytosolic polysomes (PubMed:25957688). Detected in ribosomes that are associated with the rough endoplasmic reticulum (By similarity).</text>
</comment>
<comment type="similarity">
    <text evidence="7">Belongs to the eukaryotic ribosomal protein eS21 family.</text>
</comment>
<gene>
    <name type="primary">RPS21</name>
</gene>
<proteinExistence type="evidence at protein level"/>
<protein>
    <recommendedName>
        <fullName evidence="6">Small ribosomal subunit protein eS21</fullName>
    </recommendedName>
    <alternativeName>
        <fullName>40S ribosomal protein S21</fullName>
    </alternativeName>
</protein>
<sequence length="83" mass="9111">MQNDAGEFVDLYVPRKCSASNRIIGAKDHASIQMNVAEVDKVTGRFNGQFKTYAICGAIRRMGESDDSILRLAKADGIVSKNF</sequence>
<organism>
    <name type="scientific">Homo sapiens</name>
    <name type="common">Human</name>
    <dbReference type="NCBI Taxonomy" id="9606"/>
    <lineage>
        <taxon>Eukaryota</taxon>
        <taxon>Metazoa</taxon>
        <taxon>Chordata</taxon>
        <taxon>Craniata</taxon>
        <taxon>Vertebrata</taxon>
        <taxon>Euteleostomi</taxon>
        <taxon>Mammalia</taxon>
        <taxon>Eutheria</taxon>
        <taxon>Euarchontoglires</taxon>
        <taxon>Primates</taxon>
        <taxon>Haplorrhini</taxon>
        <taxon>Catarrhini</taxon>
        <taxon>Hominidae</taxon>
        <taxon>Homo</taxon>
    </lineage>
</organism>
<reference key="1">
    <citation type="journal article" date="1993" name="Nucleic Acids Res.">
        <title>Primary structure of human ribosomal protein S21.</title>
        <authorList>
            <person name="Bhat K.S."/>
            <person name="Morrison S.G."/>
        </authorList>
    </citation>
    <scope>NUCLEOTIDE SEQUENCE [MRNA]</scope>
</reference>
<reference key="2">
    <citation type="journal article" date="2000" name="Bioorg. Khim.">
        <title>Cloning and characterization of the human ribosomal protein S21 gene.</title>
        <authorList>
            <person name="Smirnova E.V."/>
            <person name="Rakitina T.V."/>
            <person name="Evtodienko A.Y."/>
            <person name="Kostanian I.A."/>
            <person name="Lipkin V.M."/>
        </authorList>
    </citation>
    <scope>NUCLEOTIDE SEQUENCE [GENOMIC DNA]</scope>
</reference>
<reference key="3">
    <citation type="journal article" date="2002" name="Genome Res.">
        <title>The human ribosomal protein genes: sequencing and comparative analysis of 73 genes.</title>
        <authorList>
            <person name="Yoshihama M."/>
            <person name="Uechi T."/>
            <person name="Asakawa S."/>
            <person name="Kawasaki K."/>
            <person name="Kato S."/>
            <person name="Higa S."/>
            <person name="Maeda N."/>
            <person name="Minoshima S."/>
            <person name="Tanaka T."/>
            <person name="Shimizu N."/>
            <person name="Kenmochi N."/>
        </authorList>
    </citation>
    <scope>NUCLEOTIDE SEQUENCE [GENOMIC DNA]</scope>
</reference>
<reference key="4">
    <citation type="journal article" date="2001" name="Nature">
        <title>The DNA sequence and comparative analysis of human chromosome 20.</title>
        <authorList>
            <person name="Deloukas P."/>
            <person name="Matthews L.H."/>
            <person name="Ashurst J.L."/>
            <person name="Burton J."/>
            <person name="Gilbert J.G.R."/>
            <person name="Jones M."/>
            <person name="Stavrides G."/>
            <person name="Almeida J.P."/>
            <person name="Babbage A.K."/>
            <person name="Bagguley C.L."/>
            <person name="Bailey J."/>
            <person name="Barlow K.F."/>
            <person name="Bates K.N."/>
            <person name="Beard L.M."/>
            <person name="Beare D.M."/>
            <person name="Beasley O.P."/>
            <person name="Bird C.P."/>
            <person name="Blakey S.E."/>
            <person name="Bridgeman A.M."/>
            <person name="Brown A.J."/>
            <person name="Buck D."/>
            <person name="Burrill W.D."/>
            <person name="Butler A.P."/>
            <person name="Carder C."/>
            <person name="Carter N.P."/>
            <person name="Chapman J.C."/>
            <person name="Clamp M."/>
            <person name="Clark G."/>
            <person name="Clark L.N."/>
            <person name="Clark S.Y."/>
            <person name="Clee C.M."/>
            <person name="Clegg S."/>
            <person name="Cobley V.E."/>
            <person name="Collier R.E."/>
            <person name="Connor R.E."/>
            <person name="Corby N.R."/>
            <person name="Coulson A."/>
            <person name="Coville G.J."/>
            <person name="Deadman R."/>
            <person name="Dhami P.D."/>
            <person name="Dunn M."/>
            <person name="Ellington A.G."/>
            <person name="Frankland J.A."/>
            <person name="Fraser A."/>
            <person name="French L."/>
            <person name="Garner P."/>
            <person name="Grafham D.V."/>
            <person name="Griffiths C."/>
            <person name="Griffiths M.N.D."/>
            <person name="Gwilliam R."/>
            <person name="Hall R.E."/>
            <person name="Hammond S."/>
            <person name="Harley J.L."/>
            <person name="Heath P.D."/>
            <person name="Ho S."/>
            <person name="Holden J.L."/>
            <person name="Howden P.J."/>
            <person name="Huckle E."/>
            <person name="Hunt A.R."/>
            <person name="Hunt S.E."/>
            <person name="Jekosch K."/>
            <person name="Johnson C.M."/>
            <person name="Johnson D."/>
            <person name="Kay M.P."/>
            <person name="Kimberley A.M."/>
            <person name="King A."/>
            <person name="Knights A."/>
            <person name="Laird G.K."/>
            <person name="Lawlor S."/>
            <person name="Lehvaeslaiho M.H."/>
            <person name="Leversha M.A."/>
            <person name="Lloyd C."/>
            <person name="Lloyd D.M."/>
            <person name="Lovell J.D."/>
            <person name="Marsh V.L."/>
            <person name="Martin S.L."/>
            <person name="McConnachie L.J."/>
            <person name="McLay K."/>
            <person name="McMurray A.A."/>
            <person name="Milne S.A."/>
            <person name="Mistry D."/>
            <person name="Moore M.J.F."/>
            <person name="Mullikin J.C."/>
            <person name="Nickerson T."/>
            <person name="Oliver K."/>
            <person name="Parker A."/>
            <person name="Patel R."/>
            <person name="Pearce T.A.V."/>
            <person name="Peck A.I."/>
            <person name="Phillimore B.J.C.T."/>
            <person name="Prathalingam S.R."/>
            <person name="Plumb R.W."/>
            <person name="Ramsay H."/>
            <person name="Rice C.M."/>
            <person name="Ross M.T."/>
            <person name="Scott C.E."/>
            <person name="Sehra H.K."/>
            <person name="Shownkeen R."/>
            <person name="Sims S."/>
            <person name="Skuce C.D."/>
            <person name="Smith M.L."/>
            <person name="Soderlund C."/>
            <person name="Steward C.A."/>
            <person name="Sulston J.E."/>
            <person name="Swann R.M."/>
            <person name="Sycamore N."/>
            <person name="Taylor R."/>
            <person name="Tee L."/>
            <person name="Thomas D.W."/>
            <person name="Thorpe A."/>
            <person name="Tracey A."/>
            <person name="Tromans A.C."/>
            <person name="Vaudin M."/>
            <person name="Wall M."/>
            <person name="Wallis J.M."/>
            <person name="Whitehead S.L."/>
            <person name="Whittaker P."/>
            <person name="Willey D.L."/>
            <person name="Williams L."/>
            <person name="Williams S.A."/>
            <person name="Wilming L."/>
            <person name="Wray P.W."/>
            <person name="Hubbard T."/>
            <person name="Durbin R.M."/>
            <person name="Bentley D.R."/>
            <person name="Beck S."/>
            <person name="Rogers J."/>
        </authorList>
    </citation>
    <scope>NUCLEOTIDE SEQUENCE [LARGE SCALE GENOMIC DNA]</scope>
</reference>
<reference key="5">
    <citation type="journal article" date="1998" name="Genome Res.">
        <title>A map of 75 human ribosomal protein genes.</title>
        <authorList>
            <person name="Kenmochi N."/>
            <person name="Kawaguchi T."/>
            <person name="Rozen S."/>
            <person name="Davis E."/>
            <person name="Goodman N."/>
            <person name="Hudson T.J."/>
            <person name="Tanaka T."/>
            <person name="Page D.C."/>
        </authorList>
    </citation>
    <scope>NUCLEOTIDE SEQUENCE [GENOMIC DNA] OF 21-74</scope>
</reference>
<reference key="6">
    <citation type="submission" date="2006-05" db="UniProtKB">
        <authorList>
            <person name="Bienvenut W.V."/>
            <person name="Kanor S."/>
            <person name="Tissot J.-D."/>
            <person name="Quadroni M."/>
        </authorList>
    </citation>
    <scope>PROTEIN SEQUENCE OF 1-15</scope>
    <scope>ACETYLATION AT MET-1</scope>
    <scope>IDENTIFICATION BY MASS SPECTROMETRY</scope>
    <source>
        <tissue>T-cell</tissue>
    </source>
</reference>
<reference key="7">
    <citation type="journal article" date="1996" name="Eur. J. Biochem.">
        <title>Characterization of the human small-ribosomal-subunit proteins by N-terminal and internal sequencing, and mass spectrometry.</title>
        <authorList>
            <person name="Vladimirov S.N."/>
            <person name="Ivanov A.V."/>
            <person name="Karpova G.G."/>
            <person name="Musolyamov A.K."/>
            <person name="Egorov T.A."/>
            <person name="Thiede B."/>
            <person name="Wittmann-Liebold B."/>
            <person name="Otto A."/>
        </authorList>
    </citation>
    <scope>PROTEIN SEQUENCE OF 42-47</scope>
    <source>
        <tissue>Placenta</tissue>
    </source>
</reference>
<reference key="8">
    <citation type="journal article" date="2009" name="Anal. Chem.">
        <title>Lys-N and trypsin cover complementary parts of the phosphoproteome in a refined SCX-based approach.</title>
        <authorList>
            <person name="Gauci S."/>
            <person name="Helbig A.O."/>
            <person name="Slijper M."/>
            <person name="Krijgsveld J."/>
            <person name="Heck A.J."/>
            <person name="Mohammed S."/>
        </authorList>
    </citation>
    <scope>ACETYLATION [LARGE SCALE ANALYSIS] AT MET-1</scope>
    <scope>IDENTIFICATION BY MASS SPECTROMETRY [LARGE SCALE ANALYSIS]</scope>
</reference>
<reference key="9">
    <citation type="journal article" date="2009" name="Science">
        <title>Lysine acetylation targets protein complexes and co-regulates major cellular functions.</title>
        <authorList>
            <person name="Choudhary C."/>
            <person name="Kumar C."/>
            <person name="Gnad F."/>
            <person name="Nielsen M.L."/>
            <person name="Rehman M."/>
            <person name="Walther T.C."/>
            <person name="Olsen J.V."/>
            <person name="Mann M."/>
        </authorList>
    </citation>
    <scope>ACETYLATION [LARGE SCALE ANALYSIS] AT LYS-81</scope>
    <scope>IDENTIFICATION BY MASS SPECTROMETRY [LARGE SCALE ANALYSIS]</scope>
</reference>
<reference key="10">
    <citation type="journal article" date="2011" name="BMC Syst. Biol.">
        <title>Initial characterization of the human central proteome.</title>
        <authorList>
            <person name="Burkard T.R."/>
            <person name="Planyavsky M."/>
            <person name="Kaupe I."/>
            <person name="Breitwieser F.P."/>
            <person name="Buerckstuemmer T."/>
            <person name="Bennett K.L."/>
            <person name="Superti-Furga G."/>
            <person name="Colinge J."/>
        </authorList>
    </citation>
    <scope>IDENTIFICATION BY MASS SPECTROMETRY [LARGE SCALE ANALYSIS]</scope>
</reference>
<reference key="11">
    <citation type="journal article" date="2012" name="Mol. Cell. Proteomics">
        <title>Comparative large-scale characterisation of plant vs. mammal proteins reveals similar and idiosyncratic N-alpha acetylation features.</title>
        <authorList>
            <person name="Bienvenut W.V."/>
            <person name="Sumpton D."/>
            <person name="Martinez A."/>
            <person name="Lilla S."/>
            <person name="Espagne C."/>
            <person name="Meinnel T."/>
            <person name="Giglione C."/>
        </authorList>
    </citation>
    <scope>ACETYLATION [LARGE SCALE ANALYSIS] AT MET-1</scope>
    <scope>IDENTIFICATION BY MASS SPECTROMETRY [LARGE SCALE ANALYSIS]</scope>
</reference>
<reference key="12">
    <citation type="journal article" date="2012" name="Proc. Natl. Acad. Sci. U.S.A.">
        <title>N-terminal acetylome analyses and functional insights of the N-terminal acetyltransferase NatB.</title>
        <authorList>
            <person name="Van Damme P."/>
            <person name="Lasa M."/>
            <person name="Polevoda B."/>
            <person name="Gazquez C."/>
            <person name="Elosegui-Artola A."/>
            <person name="Kim D.S."/>
            <person name="De Juan-Pardo E."/>
            <person name="Demeyer K."/>
            <person name="Hole K."/>
            <person name="Larrea E."/>
            <person name="Timmerman E."/>
            <person name="Prieto J."/>
            <person name="Arnesen T."/>
            <person name="Sherman F."/>
            <person name="Gevaert K."/>
            <person name="Aldabe R."/>
        </authorList>
    </citation>
    <scope>ACETYLATION [LARGE SCALE ANALYSIS] AT MET-1</scope>
    <scope>IDENTIFICATION BY MASS SPECTROMETRY [LARGE SCALE ANALYSIS]</scope>
</reference>
<reference key="13">
    <citation type="journal article" date="2014" name="Curr. Opin. Struct. Biol.">
        <title>A new system for naming ribosomal proteins.</title>
        <authorList>
            <person name="Ban N."/>
            <person name="Beckmann R."/>
            <person name="Cate J.H.D."/>
            <person name="Dinman J.D."/>
            <person name="Dragon F."/>
            <person name="Ellis S.R."/>
            <person name="Lafontaine D.L.J."/>
            <person name="Lindahl L."/>
            <person name="Liljas A."/>
            <person name="Lipton J.M."/>
            <person name="McAlear M.A."/>
            <person name="Moore P.B."/>
            <person name="Noller H.F."/>
            <person name="Ortega J."/>
            <person name="Panse V.G."/>
            <person name="Ramakrishnan V."/>
            <person name="Spahn C.M.T."/>
            <person name="Steitz T.A."/>
            <person name="Tchorzewski M."/>
            <person name="Tollervey D."/>
            <person name="Warren A.J."/>
            <person name="Williamson J.R."/>
            <person name="Wilson D."/>
            <person name="Yonath A."/>
            <person name="Yusupov M."/>
        </authorList>
    </citation>
    <scope>NOMENCLATURE</scope>
</reference>
<reference key="14">
    <citation type="journal article" date="2014" name="J. Proteomics">
        <title>An enzyme assisted RP-RPLC approach for in-depth analysis of human liver phosphoproteome.</title>
        <authorList>
            <person name="Bian Y."/>
            <person name="Song C."/>
            <person name="Cheng K."/>
            <person name="Dong M."/>
            <person name="Wang F."/>
            <person name="Huang J."/>
            <person name="Sun D."/>
            <person name="Wang L."/>
            <person name="Ye M."/>
            <person name="Zou H."/>
        </authorList>
    </citation>
    <scope>IDENTIFICATION BY MASS SPECTROMETRY [LARGE SCALE ANALYSIS]</scope>
    <source>
        <tissue>Liver</tissue>
    </source>
</reference>
<reference key="15">
    <citation type="journal article" date="2014" name="Proc. Natl. Acad. Sci. U.S.A.">
        <title>Mapping of SUMO sites and analysis of SUMOylation changes induced by external stimuli.</title>
        <authorList>
            <person name="Impens F."/>
            <person name="Radoshevich L."/>
            <person name="Cossart P."/>
            <person name="Ribet D."/>
        </authorList>
    </citation>
    <scope>SUMOYLATION [LARGE SCALE ANALYSIS] AT LYS-41</scope>
    <scope>IDENTIFICATION BY MASS SPECTROMETRY [LARGE SCALE ANALYSIS]</scope>
</reference>
<reference key="16">
    <citation type="journal article" date="2015" name="Proteomics">
        <title>N-terminome analysis of the human mitochondrial proteome.</title>
        <authorList>
            <person name="Vaca Jacome A.S."/>
            <person name="Rabilloud T."/>
            <person name="Schaeffer-Reiss C."/>
            <person name="Rompais M."/>
            <person name="Ayoub D."/>
            <person name="Lane L."/>
            <person name="Bairoch A."/>
            <person name="Van Dorsselaer A."/>
            <person name="Carapito C."/>
        </authorList>
    </citation>
    <scope>ACETYLATION [LARGE SCALE ANALYSIS] AT MET-1</scope>
    <scope>IDENTIFICATION BY MASS SPECTROMETRY [LARGE SCALE ANALYSIS]</scope>
</reference>
<reference key="17">
    <citation type="journal article" date="2013" name="Nature">
        <title>Structures of the human and Drosophila 80S ribosome.</title>
        <authorList>
            <person name="Anger A.M."/>
            <person name="Armache J.P."/>
            <person name="Berninghausen O."/>
            <person name="Habeck M."/>
            <person name="Subklewe M."/>
            <person name="Wilson D.N."/>
            <person name="Beckmann R."/>
        </authorList>
    </citation>
    <scope>STRUCTURE BY ELECTRON MICROSCOPY (5.0 ANGSTROMS) OF 80S RIBOSOME</scope>
    <scope>FUNCTION</scope>
    <scope>SUBUNIT</scope>
    <scope>SUBCELLULAR LOCATION</scope>
</reference>
<reference evidence="11" key="18">
    <citation type="journal article" date="2015" name="Cell">
        <title>Structural snapshots of actively translating human ribosomes.</title>
        <authorList>
            <person name="Behrmann E."/>
            <person name="Loerke J."/>
            <person name="Budkevich T.V."/>
            <person name="Yamamoto K."/>
            <person name="Schmidt A."/>
            <person name="Penczek P.A."/>
            <person name="Vos M.R."/>
            <person name="Burger J."/>
            <person name="Mielke T."/>
            <person name="Scheerer P."/>
            <person name="Spahn C.M."/>
        </authorList>
    </citation>
    <scope>STRUCTURE BY ELECTRON MICROSCOPY (3.50 ANGSTROMS)</scope>
    <scope>FUNCTION</scope>
    <scope>SUBCELLULAR LOCATION</scope>
    <scope>SUBUNIT</scope>
</reference>
<reference evidence="10" key="19">
    <citation type="journal article" date="2015" name="Nature">
        <title>Structure of the human 80S ribosome.</title>
        <authorList>
            <person name="Khatter H."/>
            <person name="Myasnikov A.G."/>
            <person name="Natchiar S.K."/>
            <person name="Klaholz B.P."/>
        </authorList>
    </citation>
    <scope>STRUCTURE BY ELECTRON MICROSCOPY (3.60 ANGSTROMS)</scope>
    <scope>FUNCTION</scope>
    <scope>SUBCELLULAR LOCATION</scope>
    <scope>SUBUNIT</scope>
</reference>
<evidence type="ECO:0000250" key="1">
    <source>
        <dbReference type="UniProtKB" id="P63221"/>
    </source>
</evidence>
<evidence type="ECO:0000269" key="2">
    <source>
    </source>
</evidence>
<evidence type="ECO:0000269" key="3">
    <source>
    </source>
</evidence>
<evidence type="ECO:0000269" key="4">
    <source>
    </source>
</evidence>
<evidence type="ECO:0000269" key="5">
    <source ref="6"/>
</evidence>
<evidence type="ECO:0000303" key="6">
    <source>
    </source>
</evidence>
<evidence type="ECO:0000305" key="7"/>
<evidence type="ECO:0000305" key="8">
    <source>
    </source>
</evidence>
<evidence type="ECO:0000305" key="9">
    <source>
    </source>
</evidence>
<evidence type="ECO:0007744" key="10">
    <source>
        <dbReference type="PDB" id="4UG0"/>
    </source>
</evidence>
<evidence type="ECO:0007744" key="11">
    <source>
        <dbReference type="PDB" id="5AJ0"/>
    </source>
</evidence>
<evidence type="ECO:0007744" key="12">
    <source>
    </source>
</evidence>
<evidence type="ECO:0007744" key="13">
    <source>
    </source>
</evidence>
<evidence type="ECO:0007744" key="14">
    <source>
    </source>
</evidence>
<evidence type="ECO:0007744" key="15">
    <source>
    </source>
</evidence>
<evidence type="ECO:0007744" key="16">
    <source>
    </source>
</evidence>
<evidence type="ECO:0007744" key="17">
    <source>
    </source>
</evidence>
<evidence type="ECO:0007829" key="18">
    <source>
        <dbReference type="PDB" id="6YBD"/>
    </source>
</evidence>
<evidence type="ECO:0007829" key="19">
    <source>
        <dbReference type="PDB" id="6ZLW"/>
    </source>
</evidence>
<evidence type="ECO:0007829" key="20">
    <source>
        <dbReference type="PDB" id="7R4X"/>
    </source>
</evidence>
<evidence type="ECO:0007829" key="21">
    <source>
        <dbReference type="PDB" id="8T4S"/>
    </source>
</evidence>